<organism>
    <name type="scientific">Caenorhabditis elegans</name>
    <dbReference type="NCBI Taxonomy" id="6239"/>
    <lineage>
        <taxon>Eukaryota</taxon>
        <taxon>Metazoa</taxon>
        <taxon>Ecdysozoa</taxon>
        <taxon>Nematoda</taxon>
        <taxon>Chromadorea</taxon>
        <taxon>Rhabditida</taxon>
        <taxon>Rhabditina</taxon>
        <taxon>Rhabditomorpha</taxon>
        <taxon>Rhabditoidea</taxon>
        <taxon>Rhabditidae</taxon>
        <taxon>Peloderinae</taxon>
        <taxon>Caenorhabditis</taxon>
    </lineage>
</organism>
<reference key="1">
    <citation type="journal article" date="1989" name="J. Mol. Biol.">
        <title>Genomic organization of the glyceraldehyde-3-phosphate dehydrogenase gene family of Caenorhabditis elegans.</title>
        <authorList>
            <person name="Huang X.Y."/>
            <person name="Barrios L.A.M."/>
            <person name="Vonkhorporn P."/>
            <person name="Honda S."/>
            <person name="Albertson D.G."/>
            <person name="Hecht R.M."/>
        </authorList>
    </citation>
    <scope>NUCLEOTIDE SEQUENCE [GENOMIC DNA]</scope>
    <source>
        <strain>Bristol N2</strain>
    </source>
</reference>
<reference key="2">
    <citation type="journal article" date="1987" name="Biochim. Biophys. Acta">
        <title>The glyceraldehyde-3-phosphate dehydrogenase gene family in the nematode, Caenorhabditis elegans: isolation and characterization of one of the genes.</title>
        <authorList>
            <person name="Yarbrough P.O."/>
            <person name="Hayden M.A."/>
            <person name="Dunn L.A."/>
            <person name="Vermersch P.S."/>
            <person name="Klass M.R."/>
            <person name="Hecht R.M."/>
        </authorList>
    </citation>
    <scope>NUCLEOTIDE SEQUENCE [GENOMIC DNA]</scope>
</reference>
<reference key="3">
    <citation type="journal article" date="1998" name="Science">
        <title>Genome sequence of the nematode C. elegans: a platform for investigating biology.</title>
        <authorList>
            <consortium name="The C. elegans sequencing consortium"/>
        </authorList>
    </citation>
    <scope>NUCLEOTIDE SEQUENCE [LARGE SCALE GENOMIC DNA]</scope>
    <source>
        <strain>Bristol N2</strain>
    </source>
</reference>
<evidence type="ECO:0000250" key="1"/>
<evidence type="ECO:0000255" key="2">
    <source>
        <dbReference type="PROSITE-ProRule" id="PRU10009"/>
    </source>
</evidence>
<evidence type="ECO:0000305" key="3"/>
<protein>
    <recommendedName>
        <fullName>Glyceraldehyde-3-phosphate dehydrogenase 1</fullName>
        <shortName>GAPDH-1</shortName>
        <ecNumber>1.2.1.12</ecNumber>
    </recommendedName>
</protein>
<proteinExistence type="inferred from homology"/>
<sequence>MSKANVGINGFGRIGRLVLRAAVEKDTVQVVAVNDPFITIDYMVYLFKYDSTHGQFKGTVTYDGDFLIVQKDGKSSHKIKVFNSKDPAAIAWGSVKADFVVESTGVFTTKEKASAHLQGGAKKVIISAPSADAPMYVVGVNHEKYDASNDHVVSNASCTTNCLAPLAKVINDNFGIIEGLMTTVHAVTATQKTVDGPSGKLWRDGRGAGQNIIPASTGAAKAVGKVIPELNGKLTGMAFRVPTPDVSVVDLTVRLEKPASMDDIKKVVKAAADGPMKGILAYTEDQVVSTDFVSDPHSSIFDAGACISLNPNFVKLVSWYDNEYGYSNRVVDLIGYIATRG</sequence>
<name>G3P1_CAEEL</name>
<gene>
    <name type="primary">gpd-1</name>
    <name type="ORF">T09F3.3</name>
</gene>
<dbReference type="EC" id="1.2.1.12"/>
<dbReference type="EMBL" id="X52674">
    <property type="protein sequence ID" value="CAA36900.1"/>
    <property type="molecule type" value="Genomic_DNA"/>
</dbReference>
<dbReference type="EMBL" id="X04818">
    <property type="protein sequence ID" value="CAA28504.1"/>
    <property type="molecule type" value="Genomic_DNA"/>
</dbReference>
<dbReference type="EMBL" id="Z49070">
    <property type="protein sequence ID" value="CAA88870.1"/>
    <property type="molecule type" value="Genomic_DNA"/>
</dbReference>
<dbReference type="PIR" id="S03911">
    <property type="entry name" value="DEKWG1"/>
</dbReference>
<dbReference type="RefSeq" id="NP_496237.1">
    <property type="nucleotide sequence ID" value="NM_063836.7"/>
</dbReference>
<dbReference type="SMR" id="P04970"/>
<dbReference type="BioGRID" id="39922">
    <property type="interactions" value="14"/>
</dbReference>
<dbReference type="DIP" id="DIP-24716N"/>
<dbReference type="FunCoup" id="P04970">
    <property type="interactions" value="563"/>
</dbReference>
<dbReference type="IntAct" id="P04970">
    <property type="interactions" value="2"/>
</dbReference>
<dbReference type="STRING" id="6239.T09F3.3.2"/>
<dbReference type="PaxDb" id="6239-T09F3.3.2"/>
<dbReference type="PeptideAtlas" id="P04970"/>
<dbReference type="EnsemblMetazoa" id="T09F3.3.1">
    <property type="protein sequence ID" value="T09F3.3.1"/>
    <property type="gene ID" value="WBGene00001683"/>
</dbReference>
<dbReference type="GeneID" id="174603"/>
<dbReference type="KEGG" id="cel:CELE_T09F3.3"/>
<dbReference type="UCSC" id="T09F3.3.1">
    <property type="organism name" value="c. elegans"/>
</dbReference>
<dbReference type="AGR" id="WB:WBGene00001683"/>
<dbReference type="CTD" id="174603"/>
<dbReference type="WormBase" id="T09F3.3">
    <property type="protein sequence ID" value="CE02343"/>
    <property type="gene ID" value="WBGene00001683"/>
    <property type="gene designation" value="gpd-1"/>
</dbReference>
<dbReference type="eggNOG" id="KOG0657">
    <property type="taxonomic scope" value="Eukaryota"/>
</dbReference>
<dbReference type="GeneTree" id="ENSGT00940000153298"/>
<dbReference type="HOGENOM" id="CLU_030140_0_1_1"/>
<dbReference type="InParanoid" id="P04970"/>
<dbReference type="OMA" id="TCQMIRL"/>
<dbReference type="OrthoDB" id="1152826at2759"/>
<dbReference type="PhylomeDB" id="P04970"/>
<dbReference type="Reactome" id="R-CEL-70171">
    <property type="pathway name" value="Glycolysis"/>
</dbReference>
<dbReference type="Reactome" id="R-CEL-70263">
    <property type="pathway name" value="Gluconeogenesis"/>
</dbReference>
<dbReference type="SignaLink" id="P04970"/>
<dbReference type="UniPathway" id="UPA00109">
    <property type="reaction ID" value="UER00184"/>
</dbReference>
<dbReference type="PRO" id="PR:P04970"/>
<dbReference type="Proteomes" id="UP000001940">
    <property type="component" value="Chromosome II"/>
</dbReference>
<dbReference type="GO" id="GO:0005829">
    <property type="term" value="C:cytosol"/>
    <property type="evidence" value="ECO:0000318"/>
    <property type="project" value="GO_Central"/>
</dbReference>
<dbReference type="GO" id="GO:0004365">
    <property type="term" value="F:glyceraldehyde-3-phosphate dehydrogenase (NAD+) (phosphorylating) activity"/>
    <property type="evidence" value="ECO:0000318"/>
    <property type="project" value="GO_Central"/>
</dbReference>
<dbReference type="GO" id="GO:0051287">
    <property type="term" value="F:NAD binding"/>
    <property type="evidence" value="ECO:0007669"/>
    <property type="project" value="InterPro"/>
</dbReference>
<dbReference type="GO" id="GO:0050661">
    <property type="term" value="F:NADP binding"/>
    <property type="evidence" value="ECO:0007669"/>
    <property type="project" value="InterPro"/>
</dbReference>
<dbReference type="GO" id="GO:0006006">
    <property type="term" value="P:glucose metabolic process"/>
    <property type="evidence" value="ECO:0007669"/>
    <property type="project" value="InterPro"/>
</dbReference>
<dbReference type="GO" id="GO:0006096">
    <property type="term" value="P:glycolytic process"/>
    <property type="evidence" value="ECO:0000318"/>
    <property type="project" value="GO_Central"/>
</dbReference>
<dbReference type="CDD" id="cd18126">
    <property type="entry name" value="GAPDH_I_C"/>
    <property type="match status" value="1"/>
</dbReference>
<dbReference type="CDD" id="cd05214">
    <property type="entry name" value="GAPDH_I_N"/>
    <property type="match status" value="1"/>
</dbReference>
<dbReference type="FunFam" id="3.30.360.10:FF:000001">
    <property type="entry name" value="Glyceraldehyde-3-phosphate dehydrogenase"/>
    <property type="match status" value="1"/>
</dbReference>
<dbReference type="FunFam" id="3.40.50.720:FF:000266">
    <property type="entry name" value="Glyceraldehyde-3-phosphate dehydrogenase"/>
    <property type="match status" value="1"/>
</dbReference>
<dbReference type="Gene3D" id="3.30.360.10">
    <property type="entry name" value="Dihydrodipicolinate Reductase, domain 2"/>
    <property type="match status" value="1"/>
</dbReference>
<dbReference type="Gene3D" id="3.40.50.720">
    <property type="entry name" value="NAD(P)-binding Rossmann-like Domain"/>
    <property type="match status" value="1"/>
</dbReference>
<dbReference type="InterPro" id="IPR020831">
    <property type="entry name" value="GlycerAld/Erythrose_P_DH"/>
</dbReference>
<dbReference type="InterPro" id="IPR020830">
    <property type="entry name" value="GlycerAld_3-P_DH_AS"/>
</dbReference>
<dbReference type="InterPro" id="IPR020829">
    <property type="entry name" value="GlycerAld_3-P_DH_cat"/>
</dbReference>
<dbReference type="InterPro" id="IPR020828">
    <property type="entry name" value="GlycerAld_3-P_DH_NAD(P)-bd"/>
</dbReference>
<dbReference type="InterPro" id="IPR006424">
    <property type="entry name" value="Glyceraldehyde-3-P_DH_1"/>
</dbReference>
<dbReference type="InterPro" id="IPR036291">
    <property type="entry name" value="NAD(P)-bd_dom_sf"/>
</dbReference>
<dbReference type="NCBIfam" id="TIGR01534">
    <property type="entry name" value="GAPDH-I"/>
    <property type="match status" value="1"/>
</dbReference>
<dbReference type="PANTHER" id="PTHR10836">
    <property type="entry name" value="GLYCERALDEHYDE 3-PHOSPHATE DEHYDROGENASE"/>
    <property type="match status" value="1"/>
</dbReference>
<dbReference type="PANTHER" id="PTHR10836:SF65">
    <property type="entry name" value="GLYCERALDEHYDE-3-PHOSPHATE DEHYDROGENASE 1-RELATED"/>
    <property type="match status" value="1"/>
</dbReference>
<dbReference type="Pfam" id="PF02800">
    <property type="entry name" value="Gp_dh_C"/>
    <property type="match status" value="1"/>
</dbReference>
<dbReference type="Pfam" id="PF00044">
    <property type="entry name" value="Gp_dh_N"/>
    <property type="match status" value="1"/>
</dbReference>
<dbReference type="PIRSF" id="PIRSF000149">
    <property type="entry name" value="GAP_DH"/>
    <property type="match status" value="1"/>
</dbReference>
<dbReference type="PRINTS" id="PR00078">
    <property type="entry name" value="G3PDHDRGNASE"/>
</dbReference>
<dbReference type="SMART" id="SM00846">
    <property type="entry name" value="Gp_dh_N"/>
    <property type="match status" value="1"/>
</dbReference>
<dbReference type="SUPFAM" id="SSF55347">
    <property type="entry name" value="Glyceraldehyde-3-phosphate dehydrogenase-like, C-terminal domain"/>
    <property type="match status" value="1"/>
</dbReference>
<dbReference type="SUPFAM" id="SSF51735">
    <property type="entry name" value="NAD(P)-binding Rossmann-fold domains"/>
    <property type="match status" value="1"/>
</dbReference>
<dbReference type="PROSITE" id="PS00071">
    <property type="entry name" value="GAPDH"/>
    <property type="match status" value="1"/>
</dbReference>
<comment type="catalytic activity">
    <reaction evidence="2">
        <text>D-glyceraldehyde 3-phosphate + phosphate + NAD(+) = (2R)-3-phospho-glyceroyl phosphate + NADH + H(+)</text>
        <dbReference type="Rhea" id="RHEA:10300"/>
        <dbReference type="ChEBI" id="CHEBI:15378"/>
        <dbReference type="ChEBI" id="CHEBI:43474"/>
        <dbReference type="ChEBI" id="CHEBI:57540"/>
        <dbReference type="ChEBI" id="CHEBI:57604"/>
        <dbReference type="ChEBI" id="CHEBI:57945"/>
        <dbReference type="ChEBI" id="CHEBI:59776"/>
        <dbReference type="EC" id="1.2.1.12"/>
    </reaction>
</comment>
<comment type="pathway">
    <text>Carbohydrate degradation; glycolysis; pyruvate from D-glyceraldehyde 3-phosphate: step 1/5.</text>
</comment>
<comment type="subunit">
    <text>Homotetramer.</text>
</comment>
<comment type="subcellular location">
    <subcellularLocation>
        <location>Cytoplasm</location>
    </subcellularLocation>
</comment>
<comment type="miscellaneous">
    <text>There are four nearly identical glyceraldehyde 3-phosphate dehydrogenases in C.elegans.</text>
</comment>
<comment type="similarity">
    <text evidence="3">Belongs to the glyceraldehyde-3-phosphate dehydrogenase family.</text>
</comment>
<accession>P04970</accession>
<feature type="chain" id="PRO_0000145510" description="Glyceraldehyde-3-phosphate dehydrogenase 1">
    <location>
        <begin position="1"/>
        <end position="341"/>
    </location>
</feature>
<feature type="active site" description="Nucleophile" evidence="2">
    <location>
        <position position="158"/>
    </location>
</feature>
<feature type="binding site" evidence="1">
    <location>
        <begin position="13"/>
        <end position="14"/>
    </location>
    <ligand>
        <name>NAD(+)</name>
        <dbReference type="ChEBI" id="CHEBI:57540"/>
    </ligand>
</feature>
<feature type="binding site" evidence="1">
    <location>
        <position position="35"/>
    </location>
    <ligand>
        <name>NAD(+)</name>
        <dbReference type="ChEBI" id="CHEBI:57540"/>
    </ligand>
</feature>
<feature type="binding site" evidence="1">
    <location>
        <position position="85"/>
    </location>
    <ligand>
        <name>NAD(+)</name>
        <dbReference type="ChEBI" id="CHEBI:57540"/>
    </ligand>
</feature>
<feature type="binding site" evidence="1">
    <location>
        <begin position="157"/>
        <end position="159"/>
    </location>
    <ligand>
        <name>D-glyceraldehyde 3-phosphate</name>
        <dbReference type="ChEBI" id="CHEBI:59776"/>
    </ligand>
</feature>
<feature type="binding site" evidence="1">
    <location>
        <position position="188"/>
    </location>
    <ligand>
        <name>D-glyceraldehyde 3-phosphate</name>
        <dbReference type="ChEBI" id="CHEBI:59776"/>
    </ligand>
</feature>
<feature type="binding site" evidence="1">
    <location>
        <begin position="217"/>
        <end position="218"/>
    </location>
    <ligand>
        <name>D-glyceraldehyde 3-phosphate</name>
        <dbReference type="ChEBI" id="CHEBI:59776"/>
    </ligand>
</feature>
<feature type="binding site" evidence="1">
    <location>
        <position position="240"/>
    </location>
    <ligand>
        <name>D-glyceraldehyde 3-phosphate</name>
        <dbReference type="ChEBI" id="CHEBI:59776"/>
    </ligand>
</feature>
<feature type="binding site" evidence="1">
    <location>
        <position position="322"/>
    </location>
    <ligand>
        <name>NAD(+)</name>
        <dbReference type="ChEBI" id="CHEBI:57540"/>
    </ligand>
</feature>
<feature type="site" description="Activates thiol group during catalysis" evidence="1">
    <location>
        <position position="185"/>
    </location>
</feature>
<keyword id="KW-0963">Cytoplasm</keyword>
<keyword id="KW-0324">Glycolysis</keyword>
<keyword id="KW-0520">NAD</keyword>
<keyword id="KW-0560">Oxidoreductase</keyword>
<keyword id="KW-1185">Reference proteome</keyword>